<feature type="chain" id="PRO_1000131318" description="Phosphatidylserine decarboxylase beta chain" evidence="1">
    <location>
        <begin position="1"/>
        <end position="249"/>
    </location>
</feature>
<feature type="chain" id="PRO_1000131319" description="Phosphatidylserine decarboxylase alpha chain" evidence="1">
    <location>
        <begin position="250"/>
        <end position="283"/>
    </location>
</feature>
<feature type="active site" description="Charge relay system; for autoendoproteolytic cleavage activity" evidence="1">
    <location>
        <position position="96"/>
    </location>
</feature>
<feature type="active site" description="Charge relay system; for autoendoproteolytic cleavage activity" evidence="1">
    <location>
        <position position="152"/>
    </location>
</feature>
<feature type="active site" description="Charge relay system; for autoendoproteolytic cleavage activity" evidence="1">
    <location>
        <position position="250"/>
    </location>
</feature>
<feature type="active site" description="Schiff-base intermediate with substrate; via pyruvic acid; for decarboxylase activity" evidence="1">
    <location>
        <position position="250"/>
    </location>
</feature>
<feature type="site" description="Cleavage (non-hydrolytic); by autocatalysis" evidence="1">
    <location>
        <begin position="249"/>
        <end position="250"/>
    </location>
</feature>
<feature type="modified residue" description="Pyruvic acid (Ser); by autocatalysis" evidence="1">
    <location>
        <position position="250"/>
    </location>
</feature>
<sequence>MSFTSRLKKELFIKAQNLVPQHQLSRVVGKVAASENPILKAAVIHAFKTKYGIDLSIAEQGNALKYKSFNDFFTRALKDGVRLVDENPDSIVSPADGAISQIGKITAGEVFQAKGQSFSVEKLIGDPQLAQPFQEGEFATVYLSPRDYHRVHMPFSGTLTETLYVPGELFSVNQVTAENVPGLFARNERMVCLFDTELGRMAVVLVGAMIVAGIETVATGKVKPSGRIELQHHELKLEKGAELGRFYLGSTAIILFEKDKIEWEKRFKAESVVVMGERMGHTL</sequence>
<reference key="1">
    <citation type="journal article" date="2008" name="J. Bacteriol.">
        <title>Comparative genome sequence analysis of multidrug-resistant Acinetobacter baumannii.</title>
        <authorList>
            <person name="Adams M.D."/>
            <person name="Goglin K."/>
            <person name="Molyneaux N."/>
            <person name="Hujer K.M."/>
            <person name="Lavender H."/>
            <person name="Jamison J.J."/>
            <person name="MacDonald I.J."/>
            <person name="Martin K.M."/>
            <person name="Russo T."/>
            <person name="Campagnari A.A."/>
            <person name="Hujer A.M."/>
            <person name="Bonomo R.A."/>
            <person name="Gill S.R."/>
        </authorList>
    </citation>
    <scope>NUCLEOTIDE SEQUENCE [LARGE SCALE GENOMIC DNA]</scope>
    <source>
        <strain>AB0057</strain>
    </source>
</reference>
<gene>
    <name evidence="1" type="primary">psd</name>
    <name type="ordered locus">AB57_3830</name>
</gene>
<protein>
    <recommendedName>
        <fullName evidence="1">Phosphatidylserine decarboxylase proenzyme</fullName>
        <ecNumber evidence="1">4.1.1.65</ecNumber>
    </recommendedName>
    <component>
        <recommendedName>
            <fullName evidence="1">Phosphatidylserine decarboxylase alpha chain</fullName>
        </recommendedName>
    </component>
    <component>
        <recommendedName>
            <fullName evidence="1">Phosphatidylserine decarboxylase beta chain</fullName>
        </recommendedName>
    </component>
</protein>
<accession>B7I242</accession>
<name>PSD_ACIB5</name>
<evidence type="ECO:0000255" key="1">
    <source>
        <dbReference type="HAMAP-Rule" id="MF_00662"/>
    </source>
</evidence>
<dbReference type="EC" id="4.1.1.65" evidence="1"/>
<dbReference type="SMR" id="B7I242"/>
<dbReference type="KEGG" id="abn:AB57_3830"/>
<dbReference type="UniPathway" id="UPA00558">
    <property type="reaction ID" value="UER00616"/>
</dbReference>
<dbReference type="GO" id="GO:0005886">
    <property type="term" value="C:plasma membrane"/>
    <property type="evidence" value="ECO:0007669"/>
    <property type="project" value="UniProtKB-SubCell"/>
</dbReference>
<dbReference type="GO" id="GO:0004609">
    <property type="term" value="F:phosphatidylserine decarboxylase activity"/>
    <property type="evidence" value="ECO:0007669"/>
    <property type="project" value="UniProtKB-UniRule"/>
</dbReference>
<dbReference type="GO" id="GO:0006646">
    <property type="term" value="P:phosphatidylethanolamine biosynthetic process"/>
    <property type="evidence" value="ECO:0007669"/>
    <property type="project" value="UniProtKB-UniRule"/>
</dbReference>
<dbReference type="HAMAP" id="MF_00662">
    <property type="entry name" value="PS_decarb_PSD_B_type1"/>
    <property type="match status" value="1"/>
</dbReference>
<dbReference type="InterPro" id="IPR003817">
    <property type="entry name" value="PS_Dcarbxylase"/>
</dbReference>
<dbReference type="InterPro" id="IPR033177">
    <property type="entry name" value="PSD-B"/>
</dbReference>
<dbReference type="InterPro" id="IPR033178">
    <property type="entry name" value="PSD_type1_pro"/>
</dbReference>
<dbReference type="NCBIfam" id="TIGR00163">
    <property type="entry name" value="PS_decarb"/>
    <property type="match status" value="1"/>
</dbReference>
<dbReference type="PANTHER" id="PTHR10067">
    <property type="entry name" value="PHOSPHATIDYLSERINE DECARBOXYLASE"/>
    <property type="match status" value="1"/>
</dbReference>
<dbReference type="PANTHER" id="PTHR10067:SF6">
    <property type="entry name" value="PHOSPHATIDYLSERINE DECARBOXYLASE PROENZYME, MITOCHONDRIAL"/>
    <property type="match status" value="1"/>
</dbReference>
<dbReference type="Pfam" id="PF02666">
    <property type="entry name" value="PS_Dcarbxylase"/>
    <property type="match status" value="1"/>
</dbReference>
<comment type="function">
    <text evidence="1">Catalyzes the formation of phosphatidylethanolamine (PtdEtn) from phosphatidylserine (PtdSer).</text>
</comment>
<comment type="catalytic activity">
    <reaction evidence="1">
        <text>a 1,2-diacyl-sn-glycero-3-phospho-L-serine + H(+) = a 1,2-diacyl-sn-glycero-3-phosphoethanolamine + CO2</text>
        <dbReference type="Rhea" id="RHEA:20828"/>
        <dbReference type="ChEBI" id="CHEBI:15378"/>
        <dbReference type="ChEBI" id="CHEBI:16526"/>
        <dbReference type="ChEBI" id="CHEBI:57262"/>
        <dbReference type="ChEBI" id="CHEBI:64612"/>
        <dbReference type="EC" id="4.1.1.65"/>
    </reaction>
</comment>
<comment type="cofactor">
    <cofactor evidence="1">
        <name>pyruvate</name>
        <dbReference type="ChEBI" id="CHEBI:15361"/>
    </cofactor>
    <text evidence="1">Binds 1 pyruvoyl group covalently per subunit.</text>
</comment>
<comment type="pathway">
    <text evidence="1">Phospholipid metabolism; phosphatidylethanolamine biosynthesis; phosphatidylethanolamine from CDP-diacylglycerol: step 2/2.</text>
</comment>
<comment type="subunit">
    <text evidence="1">Heterodimer of a large membrane-associated beta subunit and a small pyruvoyl-containing alpha subunit.</text>
</comment>
<comment type="subcellular location">
    <subcellularLocation>
        <location evidence="1">Cell membrane</location>
        <topology evidence="1">Peripheral membrane protein</topology>
    </subcellularLocation>
</comment>
<comment type="PTM">
    <text evidence="1">Is synthesized initially as an inactive proenzyme. Formation of the active enzyme involves a self-maturation process in which the active site pyruvoyl group is generated from an internal serine residue via an autocatalytic post-translational modification. Two non-identical subunits are generated from the proenzyme in this reaction, and the pyruvate is formed at the N-terminus of the alpha chain, which is derived from the carboxyl end of the proenzyme. The autoendoproteolytic cleavage occurs by a canonical serine protease mechanism, in which the side chain hydroxyl group of the serine supplies its oxygen atom to form the C-terminus of the beta chain, while the remainder of the serine residue undergoes an oxidative deamination to produce ammonia and the pyruvoyl prosthetic group on the alpha chain. During this reaction, the Ser that is part of the protease active site of the proenzyme becomes the pyruvoyl prosthetic group, which constitutes an essential element of the active site of the mature decarboxylase.</text>
</comment>
<comment type="similarity">
    <text evidence="1">Belongs to the phosphatidylserine decarboxylase family. PSD-B subfamily. Prokaryotic type I sub-subfamily.</text>
</comment>
<proteinExistence type="inferred from homology"/>
<keyword id="KW-1003">Cell membrane</keyword>
<keyword id="KW-0210">Decarboxylase</keyword>
<keyword id="KW-0444">Lipid biosynthesis</keyword>
<keyword id="KW-0443">Lipid metabolism</keyword>
<keyword id="KW-0456">Lyase</keyword>
<keyword id="KW-0472">Membrane</keyword>
<keyword id="KW-0594">Phospholipid biosynthesis</keyword>
<keyword id="KW-1208">Phospholipid metabolism</keyword>
<keyword id="KW-0670">Pyruvate</keyword>
<keyword id="KW-0865">Zymogen</keyword>
<organism>
    <name type="scientific">Acinetobacter baumannii (strain AB0057)</name>
    <dbReference type="NCBI Taxonomy" id="480119"/>
    <lineage>
        <taxon>Bacteria</taxon>
        <taxon>Pseudomonadati</taxon>
        <taxon>Pseudomonadota</taxon>
        <taxon>Gammaproteobacteria</taxon>
        <taxon>Moraxellales</taxon>
        <taxon>Moraxellaceae</taxon>
        <taxon>Acinetobacter</taxon>
        <taxon>Acinetobacter calcoaceticus/baumannii complex</taxon>
    </lineage>
</organism>